<reference key="1">
    <citation type="journal article" date="1998" name="FEMS Microbiol. Lett.">
        <title>The Staphylococcus qacH gene product: a new member of the SMR family encoding multidrug resistance.</title>
        <authorList>
            <person name="Heir E."/>
            <person name="Sundheim G."/>
            <person name="Holck A.L."/>
        </authorList>
    </citation>
    <scope>NUCLEOTIDE SEQUENCE [GENOMIC DNA]</scope>
    <source>
        <strain>ST2H6</strain>
    </source>
</reference>
<dbReference type="EMBL" id="Y16945">
    <property type="protein sequence ID" value="CAA76544.1"/>
    <property type="molecule type" value="Genomic_DNA"/>
</dbReference>
<dbReference type="RefSeq" id="WP_032489340.1">
    <property type="nucleotide sequence ID" value="NG_052082.1"/>
</dbReference>
<dbReference type="SMR" id="O87868"/>
<dbReference type="CARD" id="ARO:3003836">
    <property type="molecule name" value="qacH"/>
    <property type="mechanism identifier" value="ARO:0010000"/>
    <property type="mechanism name" value="antibiotic efflux"/>
</dbReference>
<dbReference type="GO" id="GO:0005886">
    <property type="term" value="C:plasma membrane"/>
    <property type="evidence" value="ECO:0007669"/>
    <property type="project" value="UniProtKB-SubCell"/>
</dbReference>
<dbReference type="GO" id="GO:0015199">
    <property type="term" value="F:amino-acid betaine transmembrane transporter activity"/>
    <property type="evidence" value="ECO:0007669"/>
    <property type="project" value="TreeGrafter"/>
</dbReference>
<dbReference type="GO" id="GO:0015297">
    <property type="term" value="F:antiporter activity"/>
    <property type="evidence" value="ECO:0007669"/>
    <property type="project" value="TreeGrafter"/>
</dbReference>
<dbReference type="GO" id="GO:0015220">
    <property type="term" value="F:choline transmembrane transporter activity"/>
    <property type="evidence" value="ECO:0007669"/>
    <property type="project" value="TreeGrafter"/>
</dbReference>
<dbReference type="GO" id="GO:0031460">
    <property type="term" value="P:glycine betaine transport"/>
    <property type="evidence" value="ECO:0007669"/>
    <property type="project" value="TreeGrafter"/>
</dbReference>
<dbReference type="FunFam" id="1.10.3730.20:FF:000001">
    <property type="entry name" value="Quaternary ammonium compound resistance transporter SugE"/>
    <property type="match status" value="1"/>
</dbReference>
<dbReference type="Gene3D" id="1.10.3730.20">
    <property type="match status" value="1"/>
</dbReference>
<dbReference type="InterPro" id="IPR000390">
    <property type="entry name" value="Small_drug/metabolite_transptr"/>
</dbReference>
<dbReference type="InterPro" id="IPR045324">
    <property type="entry name" value="Small_multidrug_res"/>
</dbReference>
<dbReference type="NCBIfam" id="NF000279">
    <property type="entry name" value="qac_SMR_H"/>
    <property type="match status" value="1"/>
</dbReference>
<dbReference type="NCBIfam" id="NF000384">
    <property type="entry name" value="QacCGHJ"/>
    <property type="match status" value="1"/>
</dbReference>
<dbReference type="PANTHER" id="PTHR30561:SF1">
    <property type="entry name" value="MULTIDRUG TRANSPORTER EMRE"/>
    <property type="match status" value="1"/>
</dbReference>
<dbReference type="PANTHER" id="PTHR30561">
    <property type="entry name" value="SMR FAMILY PROTON-DEPENDENT DRUG EFFLUX TRANSPORTER SUGE"/>
    <property type="match status" value="1"/>
</dbReference>
<dbReference type="Pfam" id="PF00893">
    <property type="entry name" value="Multi_Drug_Res"/>
    <property type="match status" value="1"/>
</dbReference>
<dbReference type="SUPFAM" id="SSF103481">
    <property type="entry name" value="Multidrug resistance efflux transporter EmrE"/>
    <property type="match status" value="1"/>
</dbReference>
<accession>O87868</accession>
<evidence type="ECO:0000255" key="1"/>
<evidence type="ECO:0000305" key="2"/>
<organism>
    <name type="scientific">Staphylococcus saprophyticus</name>
    <dbReference type="NCBI Taxonomy" id="29385"/>
    <lineage>
        <taxon>Bacteria</taxon>
        <taxon>Bacillati</taxon>
        <taxon>Bacillota</taxon>
        <taxon>Bacilli</taxon>
        <taxon>Bacillales</taxon>
        <taxon>Staphylococcaceae</taxon>
        <taxon>Staphylococcus</taxon>
    </lineage>
</organism>
<gene>
    <name type="primary">qacH</name>
</gene>
<feature type="chain" id="PRO_0000108089" description="Quaternary ammonium compound-resistance protein QacH">
    <location>
        <begin position="1"/>
        <end position="107"/>
    </location>
</feature>
<feature type="transmembrane region" description="Helical" evidence="1">
    <location>
        <begin position="1"/>
        <end position="21"/>
    </location>
</feature>
<feature type="transmembrane region" description="Helical" evidence="1">
    <location>
        <begin position="26"/>
        <end position="46"/>
    </location>
</feature>
<feature type="transmembrane region" description="Helical" evidence="1">
    <location>
        <begin position="57"/>
        <end position="77"/>
    </location>
</feature>
<feature type="transmembrane region" description="Helical" evidence="1">
    <location>
        <begin position="84"/>
        <end position="104"/>
    </location>
</feature>
<keyword id="KW-1003">Cell membrane</keyword>
<keyword id="KW-0472">Membrane</keyword>
<keyword id="KW-0614">Plasmid</keyword>
<keyword id="KW-0812">Transmembrane</keyword>
<keyword id="KW-1133">Transmembrane helix</keyword>
<keyword id="KW-0813">Transport</keyword>
<name>QACH_STASA</name>
<comment type="function">
    <text>Multidrug exporter. Is implicated for the resistance to bacteriocidal quaternary ammonium compounds.</text>
</comment>
<comment type="subcellular location">
    <subcellularLocation>
        <location evidence="2">Cell membrane</location>
        <topology evidence="2">Multi-pass membrane protein</topology>
    </subcellularLocation>
</comment>
<comment type="similarity">
    <text evidence="2">Belongs to the drug/metabolite transporter (DMT) superfamily. Small multidrug resistance (SMR) (TC 2.A.7.1) family.</text>
</comment>
<proteinExistence type="inferred from homology"/>
<sequence length="107" mass="11851">MPYLYLLLSIVSEVIGSAFLKSSDGFSKLYPTITTIISFLICFYFLSKTMQHLPLNITYASWAGLGLVLTTIVSVLIFKEQINLISIISIILIIFGVVLLNTFGSSH</sequence>
<protein>
    <recommendedName>
        <fullName>Quaternary ammonium compound-resistance protein QacH</fullName>
    </recommendedName>
    <alternativeName>
        <fullName>Quaternary ammonium determinant H</fullName>
    </alternativeName>
</protein>
<geneLocation type="plasmid">
    <name>pST2H6</name>
</geneLocation>